<gene>
    <name evidence="1" type="primary">pth</name>
    <name type="ordered locus">Maqu_2367</name>
</gene>
<proteinExistence type="inferred from homology"/>
<protein>
    <recommendedName>
        <fullName evidence="1">Peptidyl-tRNA hydrolase</fullName>
        <shortName evidence="1">Pth</shortName>
        <ecNumber evidence="1">3.1.1.29</ecNumber>
    </recommendedName>
</protein>
<reference key="1">
    <citation type="journal article" date="2011" name="Appl. Environ. Microbiol.">
        <title>Genomic potential of Marinobacter aquaeolei, a biogeochemical 'opportunitroph'.</title>
        <authorList>
            <person name="Singer E."/>
            <person name="Webb E.A."/>
            <person name="Nelson W.C."/>
            <person name="Heidelberg J.F."/>
            <person name="Ivanova N."/>
            <person name="Pati A."/>
            <person name="Edwards K.J."/>
        </authorList>
    </citation>
    <scope>NUCLEOTIDE SEQUENCE [LARGE SCALE GENOMIC DNA]</scope>
    <source>
        <strain>ATCC 700491 / DSM 11845 / VT8</strain>
    </source>
</reference>
<comment type="function">
    <text evidence="1">Hydrolyzes ribosome-free peptidyl-tRNAs (with 1 or more amino acids incorporated), which drop off the ribosome during protein synthesis, or as a result of ribosome stalling.</text>
</comment>
<comment type="function">
    <text evidence="1">Catalyzes the release of premature peptidyl moieties from peptidyl-tRNA molecules trapped in stalled 50S ribosomal subunits, and thus maintains levels of free tRNAs and 50S ribosomes.</text>
</comment>
<comment type="catalytic activity">
    <reaction evidence="1">
        <text>an N-acyl-L-alpha-aminoacyl-tRNA + H2O = an N-acyl-L-amino acid + a tRNA + H(+)</text>
        <dbReference type="Rhea" id="RHEA:54448"/>
        <dbReference type="Rhea" id="RHEA-COMP:10123"/>
        <dbReference type="Rhea" id="RHEA-COMP:13883"/>
        <dbReference type="ChEBI" id="CHEBI:15377"/>
        <dbReference type="ChEBI" id="CHEBI:15378"/>
        <dbReference type="ChEBI" id="CHEBI:59874"/>
        <dbReference type="ChEBI" id="CHEBI:78442"/>
        <dbReference type="ChEBI" id="CHEBI:138191"/>
        <dbReference type="EC" id="3.1.1.29"/>
    </reaction>
</comment>
<comment type="subunit">
    <text evidence="1">Monomer.</text>
</comment>
<comment type="subcellular location">
    <subcellularLocation>
        <location evidence="1">Cytoplasm</location>
    </subcellularLocation>
</comment>
<comment type="similarity">
    <text evidence="1">Belongs to the PTH family.</text>
</comment>
<sequence length="196" mass="21266">MAQDIVMVVGLGNPGSDYENTRHNAGALFVEALAREAGQTLRPEKKYHGLYARIQWQGLDLHLLNPSTFMNRSGTAIKALADFFKISPEQILVAHDELDLPPGTAKLKKGGGHGGHNGLRDTIAHLGTNDFQRLRLGIGHPGDSRKVTGFVLGRLGKQETEQLTAVFDEVMRVLPDAASGKLAAAMNRLHSFKPTP</sequence>
<accession>A1U374</accession>
<evidence type="ECO:0000255" key="1">
    <source>
        <dbReference type="HAMAP-Rule" id="MF_00083"/>
    </source>
</evidence>
<dbReference type="EC" id="3.1.1.29" evidence="1"/>
<dbReference type="EMBL" id="CP000514">
    <property type="protein sequence ID" value="ABM19443.1"/>
    <property type="molecule type" value="Genomic_DNA"/>
</dbReference>
<dbReference type="RefSeq" id="WP_011785830.1">
    <property type="nucleotide sequence ID" value="NC_008740.1"/>
</dbReference>
<dbReference type="SMR" id="A1U374"/>
<dbReference type="STRING" id="351348.Maqu_2367"/>
<dbReference type="KEGG" id="maq:Maqu_2367"/>
<dbReference type="eggNOG" id="COG0193">
    <property type="taxonomic scope" value="Bacteria"/>
</dbReference>
<dbReference type="HOGENOM" id="CLU_062456_3_1_6"/>
<dbReference type="OrthoDB" id="9800507at2"/>
<dbReference type="Proteomes" id="UP000000998">
    <property type="component" value="Chromosome"/>
</dbReference>
<dbReference type="GO" id="GO:0005737">
    <property type="term" value="C:cytoplasm"/>
    <property type="evidence" value="ECO:0007669"/>
    <property type="project" value="UniProtKB-SubCell"/>
</dbReference>
<dbReference type="GO" id="GO:0004045">
    <property type="term" value="F:peptidyl-tRNA hydrolase activity"/>
    <property type="evidence" value="ECO:0007669"/>
    <property type="project" value="UniProtKB-UniRule"/>
</dbReference>
<dbReference type="GO" id="GO:0000049">
    <property type="term" value="F:tRNA binding"/>
    <property type="evidence" value="ECO:0007669"/>
    <property type="project" value="UniProtKB-UniRule"/>
</dbReference>
<dbReference type="GO" id="GO:0006515">
    <property type="term" value="P:protein quality control for misfolded or incompletely synthesized proteins"/>
    <property type="evidence" value="ECO:0007669"/>
    <property type="project" value="UniProtKB-UniRule"/>
</dbReference>
<dbReference type="GO" id="GO:0072344">
    <property type="term" value="P:rescue of stalled ribosome"/>
    <property type="evidence" value="ECO:0007669"/>
    <property type="project" value="UniProtKB-UniRule"/>
</dbReference>
<dbReference type="CDD" id="cd00462">
    <property type="entry name" value="PTH"/>
    <property type="match status" value="1"/>
</dbReference>
<dbReference type="FunFam" id="3.40.50.1470:FF:000001">
    <property type="entry name" value="Peptidyl-tRNA hydrolase"/>
    <property type="match status" value="1"/>
</dbReference>
<dbReference type="Gene3D" id="3.40.50.1470">
    <property type="entry name" value="Peptidyl-tRNA hydrolase"/>
    <property type="match status" value="1"/>
</dbReference>
<dbReference type="HAMAP" id="MF_00083">
    <property type="entry name" value="Pept_tRNA_hydro_bact"/>
    <property type="match status" value="1"/>
</dbReference>
<dbReference type="InterPro" id="IPR001328">
    <property type="entry name" value="Pept_tRNA_hydro"/>
</dbReference>
<dbReference type="InterPro" id="IPR018171">
    <property type="entry name" value="Pept_tRNA_hydro_CS"/>
</dbReference>
<dbReference type="InterPro" id="IPR036416">
    <property type="entry name" value="Pept_tRNA_hydro_sf"/>
</dbReference>
<dbReference type="NCBIfam" id="TIGR00447">
    <property type="entry name" value="pth"/>
    <property type="match status" value="1"/>
</dbReference>
<dbReference type="PANTHER" id="PTHR17224">
    <property type="entry name" value="PEPTIDYL-TRNA HYDROLASE"/>
    <property type="match status" value="1"/>
</dbReference>
<dbReference type="PANTHER" id="PTHR17224:SF1">
    <property type="entry name" value="PEPTIDYL-TRNA HYDROLASE"/>
    <property type="match status" value="1"/>
</dbReference>
<dbReference type="Pfam" id="PF01195">
    <property type="entry name" value="Pept_tRNA_hydro"/>
    <property type="match status" value="1"/>
</dbReference>
<dbReference type="SUPFAM" id="SSF53178">
    <property type="entry name" value="Peptidyl-tRNA hydrolase-like"/>
    <property type="match status" value="1"/>
</dbReference>
<dbReference type="PROSITE" id="PS01195">
    <property type="entry name" value="PEPT_TRNA_HYDROL_1"/>
    <property type="match status" value="1"/>
</dbReference>
<dbReference type="PROSITE" id="PS01196">
    <property type="entry name" value="PEPT_TRNA_HYDROL_2"/>
    <property type="match status" value="1"/>
</dbReference>
<feature type="chain" id="PRO_1000010609" description="Peptidyl-tRNA hydrolase">
    <location>
        <begin position="1"/>
        <end position="196"/>
    </location>
</feature>
<feature type="active site" description="Proton acceptor" evidence="1">
    <location>
        <position position="23"/>
    </location>
</feature>
<feature type="binding site" evidence="1">
    <location>
        <position position="18"/>
    </location>
    <ligand>
        <name>tRNA</name>
        <dbReference type="ChEBI" id="CHEBI:17843"/>
    </ligand>
</feature>
<feature type="binding site" evidence="1">
    <location>
        <position position="69"/>
    </location>
    <ligand>
        <name>tRNA</name>
        <dbReference type="ChEBI" id="CHEBI:17843"/>
    </ligand>
</feature>
<feature type="binding site" evidence="1">
    <location>
        <position position="71"/>
    </location>
    <ligand>
        <name>tRNA</name>
        <dbReference type="ChEBI" id="CHEBI:17843"/>
    </ligand>
</feature>
<feature type="binding site" evidence="1">
    <location>
        <position position="117"/>
    </location>
    <ligand>
        <name>tRNA</name>
        <dbReference type="ChEBI" id="CHEBI:17843"/>
    </ligand>
</feature>
<feature type="site" description="Discriminates between blocked and unblocked aminoacyl-tRNA" evidence="1">
    <location>
        <position position="13"/>
    </location>
</feature>
<feature type="site" description="Stabilizes the basic form of H active site to accept a proton" evidence="1">
    <location>
        <position position="96"/>
    </location>
</feature>
<name>PTH_MARN8</name>
<keyword id="KW-0963">Cytoplasm</keyword>
<keyword id="KW-0378">Hydrolase</keyword>
<keyword id="KW-0694">RNA-binding</keyword>
<keyword id="KW-0820">tRNA-binding</keyword>
<organism>
    <name type="scientific">Marinobacter nauticus (strain ATCC 700491 / DSM 11845 / VT8)</name>
    <name type="common">Marinobacter aquaeolei</name>
    <dbReference type="NCBI Taxonomy" id="351348"/>
    <lineage>
        <taxon>Bacteria</taxon>
        <taxon>Pseudomonadati</taxon>
        <taxon>Pseudomonadota</taxon>
        <taxon>Gammaproteobacteria</taxon>
        <taxon>Pseudomonadales</taxon>
        <taxon>Marinobacteraceae</taxon>
        <taxon>Marinobacter</taxon>
    </lineage>
</organism>